<name>PSBA_AETGR</name>
<protein>
    <recommendedName>
        <fullName evidence="2">Photosystem II protein D1</fullName>
        <shortName evidence="2">PSII D1 protein</shortName>
        <ecNumber evidence="2">1.10.3.9</ecNumber>
    </recommendedName>
    <alternativeName>
        <fullName evidence="2">Photosystem II Q(B) protein</fullName>
    </alternativeName>
</protein>
<geneLocation type="chloroplast"/>
<reference key="1">
    <citation type="submission" date="2007-03" db="EMBL/GenBank/DDBJ databases">
        <title>Sequencing analysis of Aethionema grandiflorum chloroplast DNA.</title>
        <authorList>
            <person name="Hosouchi T."/>
            <person name="Tsuruoka H."/>
            <person name="Kotani H."/>
        </authorList>
    </citation>
    <scope>NUCLEOTIDE SEQUENCE [LARGE SCALE GENOMIC DNA]</scope>
</reference>
<dbReference type="EC" id="1.10.3.9" evidence="2"/>
<dbReference type="EMBL" id="AP009367">
    <property type="protein sequence ID" value="BAF49835.1"/>
    <property type="molecule type" value="Genomic_DNA"/>
</dbReference>
<dbReference type="RefSeq" id="YP_001123011.1">
    <property type="nucleotide sequence ID" value="NC_009266.1"/>
</dbReference>
<dbReference type="SMR" id="A4QJI0"/>
<dbReference type="GeneID" id="4962228"/>
<dbReference type="GO" id="GO:0009535">
    <property type="term" value="C:chloroplast thylakoid membrane"/>
    <property type="evidence" value="ECO:0007669"/>
    <property type="project" value="UniProtKB-SubCell"/>
</dbReference>
<dbReference type="GO" id="GO:0009523">
    <property type="term" value="C:photosystem II"/>
    <property type="evidence" value="ECO:0007669"/>
    <property type="project" value="UniProtKB-KW"/>
</dbReference>
<dbReference type="GO" id="GO:0016168">
    <property type="term" value="F:chlorophyll binding"/>
    <property type="evidence" value="ECO:0007669"/>
    <property type="project" value="UniProtKB-UniRule"/>
</dbReference>
<dbReference type="GO" id="GO:0045156">
    <property type="term" value="F:electron transporter, transferring electrons within the cyclic electron transport pathway of photosynthesis activity"/>
    <property type="evidence" value="ECO:0007669"/>
    <property type="project" value="InterPro"/>
</dbReference>
<dbReference type="GO" id="GO:0005506">
    <property type="term" value="F:iron ion binding"/>
    <property type="evidence" value="ECO:0007669"/>
    <property type="project" value="UniProtKB-UniRule"/>
</dbReference>
<dbReference type="GO" id="GO:0016682">
    <property type="term" value="F:oxidoreductase activity, acting on diphenols and related substances as donors, oxygen as acceptor"/>
    <property type="evidence" value="ECO:0007669"/>
    <property type="project" value="UniProtKB-UniRule"/>
</dbReference>
<dbReference type="GO" id="GO:0010242">
    <property type="term" value="F:oxygen evolving activity"/>
    <property type="evidence" value="ECO:0007669"/>
    <property type="project" value="UniProtKB-EC"/>
</dbReference>
<dbReference type="GO" id="GO:0009772">
    <property type="term" value="P:photosynthetic electron transport in photosystem II"/>
    <property type="evidence" value="ECO:0007669"/>
    <property type="project" value="InterPro"/>
</dbReference>
<dbReference type="GO" id="GO:0009635">
    <property type="term" value="P:response to herbicide"/>
    <property type="evidence" value="ECO:0007669"/>
    <property type="project" value="UniProtKB-KW"/>
</dbReference>
<dbReference type="CDD" id="cd09289">
    <property type="entry name" value="Photosystem-II_D1"/>
    <property type="match status" value="1"/>
</dbReference>
<dbReference type="FunFam" id="1.20.85.10:FF:000002">
    <property type="entry name" value="Photosystem II protein D1"/>
    <property type="match status" value="1"/>
</dbReference>
<dbReference type="Gene3D" id="1.20.85.10">
    <property type="entry name" value="Photosystem II protein D1-like"/>
    <property type="match status" value="1"/>
</dbReference>
<dbReference type="HAMAP" id="MF_01379">
    <property type="entry name" value="PSII_PsbA_D1"/>
    <property type="match status" value="1"/>
</dbReference>
<dbReference type="InterPro" id="IPR055266">
    <property type="entry name" value="D1/D2"/>
</dbReference>
<dbReference type="InterPro" id="IPR036854">
    <property type="entry name" value="Photo_II_D1/D2_sf"/>
</dbReference>
<dbReference type="InterPro" id="IPR000484">
    <property type="entry name" value="Photo_RC_L/M"/>
</dbReference>
<dbReference type="InterPro" id="IPR055265">
    <property type="entry name" value="Photo_RC_L/M_CS"/>
</dbReference>
<dbReference type="InterPro" id="IPR005867">
    <property type="entry name" value="PSII_D1"/>
</dbReference>
<dbReference type="NCBIfam" id="TIGR01151">
    <property type="entry name" value="psbA"/>
    <property type="match status" value="1"/>
</dbReference>
<dbReference type="PANTHER" id="PTHR33149">
    <property type="entry name" value="PHOTOSYSTEM II PROTEIN D1"/>
    <property type="match status" value="1"/>
</dbReference>
<dbReference type="PANTHER" id="PTHR33149:SF55">
    <property type="entry name" value="PHOTOSYSTEM II PROTEIN D1"/>
    <property type="match status" value="1"/>
</dbReference>
<dbReference type="Pfam" id="PF00124">
    <property type="entry name" value="Photo_RC"/>
    <property type="match status" value="1"/>
</dbReference>
<dbReference type="PRINTS" id="PR00256">
    <property type="entry name" value="REACTNCENTRE"/>
</dbReference>
<dbReference type="SUPFAM" id="SSF81483">
    <property type="entry name" value="Bacterial photosystem II reaction centre, L and M subunits"/>
    <property type="match status" value="1"/>
</dbReference>
<dbReference type="PROSITE" id="PS00244">
    <property type="entry name" value="REACTION_CENTER"/>
    <property type="match status" value="1"/>
</dbReference>
<organism>
    <name type="scientific">Aethionema grandiflorum</name>
    <name type="common">Persian stone-cress</name>
    <dbReference type="NCBI Taxonomy" id="72657"/>
    <lineage>
        <taxon>Eukaryota</taxon>
        <taxon>Viridiplantae</taxon>
        <taxon>Streptophyta</taxon>
        <taxon>Embryophyta</taxon>
        <taxon>Tracheophyta</taxon>
        <taxon>Spermatophyta</taxon>
        <taxon>Magnoliopsida</taxon>
        <taxon>eudicotyledons</taxon>
        <taxon>Gunneridae</taxon>
        <taxon>Pentapetalae</taxon>
        <taxon>rosids</taxon>
        <taxon>malvids</taxon>
        <taxon>Brassicales</taxon>
        <taxon>Brassicaceae</taxon>
        <taxon>Aethionemeae</taxon>
        <taxon>Aethionema</taxon>
    </lineage>
</organism>
<keyword id="KW-0007">Acetylation</keyword>
<keyword id="KW-0106">Calcium</keyword>
<keyword id="KW-0148">Chlorophyll</keyword>
<keyword id="KW-0150">Chloroplast</keyword>
<keyword id="KW-0157">Chromophore</keyword>
<keyword id="KW-0249">Electron transport</keyword>
<keyword id="KW-0359">Herbicide resistance</keyword>
<keyword id="KW-0408">Iron</keyword>
<keyword id="KW-0460">Magnesium</keyword>
<keyword id="KW-0464">Manganese</keyword>
<keyword id="KW-0472">Membrane</keyword>
<keyword id="KW-0479">Metal-binding</keyword>
<keyword id="KW-0560">Oxidoreductase</keyword>
<keyword id="KW-0597">Phosphoprotein</keyword>
<keyword id="KW-0602">Photosynthesis</keyword>
<keyword id="KW-0604">Photosystem II</keyword>
<keyword id="KW-0934">Plastid</keyword>
<keyword id="KW-0793">Thylakoid</keyword>
<keyword id="KW-0812">Transmembrane</keyword>
<keyword id="KW-1133">Transmembrane helix</keyword>
<keyword id="KW-0813">Transport</keyword>
<proteinExistence type="inferred from homology"/>
<comment type="function">
    <text evidence="2">Photosystem II (PSII) is a light-driven water:plastoquinone oxidoreductase that uses light energy to abstract electrons from H(2)O, generating O(2) and a proton gradient subsequently used for ATP formation. It consists of a core antenna complex that captures photons, and an electron transfer chain that converts photonic excitation into a charge separation. The D1/D2 (PsbA/PsbD) reaction center heterodimer binds P680, the primary electron donor of PSII as well as several subsequent electron acceptors.</text>
</comment>
<comment type="catalytic activity">
    <reaction evidence="2">
        <text>2 a plastoquinone + 4 hnu + 2 H2O = 2 a plastoquinol + O2</text>
        <dbReference type="Rhea" id="RHEA:36359"/>
        <dbReference type="Rhea" id="RHEA-COMP:9561"/>
        <dbReference type="Rhea" id="RHEA-COMP:9562"/>
        <dbReference type="ChEBI" id="CHEBI:15377"/>
        <dbReference type="ChEBI" id="CHEBI:15379"/>
        <dbReference type="ChEBI" id="CHEBI:17757"/>
        <dbReference type="ChEBI" id="CHEBI:30212"/>
        <dbReference type="ChEBI" id="CHEBI:62192"/>
        <dbReference type="EC" id="1.10.3.9"/>
    </reaction>
</comment>
<comment type="cofactor">
    <text evidence="2">The D1/D2 heterodimer binds P680, chlorophylls that are the primary electron donor of PSII, and subsequent electron acceptors. It shares a non-heme iron and each subunit binds pheophytin, quinone, additional chlorophylls, carotenoids and lipids. D1 provides most of the ligands for the Mn4-Ca-O5 cluster of the oxygen-evolving complex (OEC). There is also a Cl(-1) ion associated with D1 and D2, which is required for oxygen evolution. The PSII complex binds additional chlorophylls, carotenoids and specific lipids.</text>
</comment>
<comment type="subunit">
    <text evidence="2">PSII is composed of 1 copy each of membrane proteins PsbA, PsbB, PsbC, PsbD, PsbE, PsbF, PsbH, PsbI, PsbJ, PsbK, PsbL, PsbM, PsbT, PsbX, PsbY, PsbZ, Psb30/Ycf12, at least 3 peripheral proteins of the oxygen-evolving complex and a large number of cofactors. It forms dimeric complexes.</text>
</comment>
<comment type="subcellular location">
    <subcellularLocation>
        <location evidence="2">Plastid</location>
        <location evidence="2">Chloroplast thylakoid membrane</location>
        <topology evidence="2">Multi-pass membrane protein</topology>
    </subcellularLocation>
</comment>
<comment type="PTM">
    <text evidence="2">Tyr-161 forms a radical intermediate that is referred to as redox-active TyrZ, YZ or Y-Z.</text>
</comment>
<comment type="PTM">
    <text evidence="2">C-terminally processed by CTPA; processing is essential to allow assembly of the oxygen-evolving complex and thus photosynthetic growth.</text>
</comment>
<comment type="miscellaneous">
    <text evidence="2">2 of the reaction center chlorophylls (ChlD1 and ChlD2) are entirely coordinated by water.</text>
</comment>
<comment type="miscellaneous">
    <text evidence="2">Herbicides such as atrazine, BNT, diuron or ioxynil bind in the Q(B) binding site and block subsequent electron transfer.</text>
</comment>
<comment type="similarity">
    <text evidence="2">Belongs to the reaction center PufL/M/PsbA/D family.</text>
</comment>
<gene>
    <name evidence="2" type="primary">psbA</name>
</gene>
<accession>A4QJI0</accession>
<feature type="initiator methionine" description="Removed" evidence="1">
    <location>
        <position position="1"/>
    </location>
</feature>
<feature type="chain" id="PRO_0000339940" description="Photosystem II protein D1" evidence="2">
    <location>
        <begin position="2"/>
        <end position="344"/>
    </location>
</feature>
<feature type="propeptide" id="PRO_0000339941" evidence="2">
    <location>
        <begin position="345"/>
        <end position="353"/>
    </location>
</feature>
<feature type="transmembrane region" description="Helical" evidence="2">
    <location>
        <begin position="29"/>
        <end position="46"/>
    </location>
</feature>
<feature type="transmembrane region" description="Helical" evidence="2">
    <location>
        <begin position="118"/>
        <end position="133"/>
    </location>
</feature>
<feature type="transmembrane region" description="Helical" evidence="2">
    <location>
        <begin position="142"/>
        <end position="156"/>
    </location>
</feature>
<feature type="transmembrane region" description="Helical" evidence="2">
    <location>
        <begin position="197"/>
        <end position="218"/>
    </location>
</feature>
<feature type="transmembrane region" description="Helical" evidence="2">
    <location>
        <begin position="274"/>
        <end position="288"/>
    </location>
</feature>
<feature type="binding site" description="axial binding residue" evidence="2">
    <location>
        <position position="118"/>
    </location>
    <ligand>
        <name>chlorophyll a</name>
        <dbReference type="ChEBI" id="CHEBI:58416"/>
        <label>ChlzD1</label>
    </ligand>
    <ligandPart>
        <name>Mg</name>
        <dbReference type="ChEBI" id="CHEBI:25107"/>
    </ligandPart>
</feature>
<feature type="binding site" evidence="2">
    <location>
        <position position="126"/>
    </location>
    <ligand>
        <name>pheophytin a</name>
        <dbReference type="ChEBI" id="CHEBI:136840"/>
        <label>D1</label>
    </ligand>
</feature>
<feature type="binding site" evidence="2">
    <location>
        <position position="170"/>
    </location>
    <ligand>
        <name>[CaMn4O5] cluster</name>
        <dbReference type="ChEBI" id="CHEBI:189552"/>
    </ligand>
</feature>
<feature type="binding site" evidence="2">
    <location>
        <position position="189"/>
    </location>
    <ligand>
        <name>[CaMn4O5] cluster</name>
        <dbReference type="ChEBI" id="CHEBI:189552"/>
    </ligand>
</feature>
<feature type="binding site" description="axial binding residue" evidence="2">
    <location>
        <position position="198"/>
    </location>
    <ligand>
        <name>chlorophyll a</name>
        <dbReference type="ChEBI" id="CHEBI:58416"/>
        <label>PD1</label>
    </ligand>
    <ligandPart>
        <name>Mg</name>
        <dbReference type="ChEBI" id="CHEBI:25107"/>
    </ligandPart>
</feature>
<feature type="binding site" evidence="2">
    <location>
        <position position="215"/>
    </location>
    <ligand>
        <name>a quinone</name>
        <dbReference type="ChEBI" id="CHEBI:132124"/>
        <label>B</label>
    </ligand>
</feature>
<feature type="binding site" evidence="2">
    <location>
        <position position="215"/>
    </location>
    <ligand>
        <name>Fe cation</name>
        <dbReference type="ChEBI" id="CHEBI:24875"/>
        <note>ligand shared with heterodimeric partner</note>
    </ligand>
</feature>
<feature type="binding site" evidence="2">
    <location>
        <begin position="264"/>
        <end position="265"/>
    </location>
    <ligand>
        <name>a quinone</name>
        <dbReference type="ChEBI" id="CHEBI:132124"/>
        <label>B</label>
    </ligand>
</feature>
<feature type="binding site" evidence="2">
    <location>
        <position position="272"/>
    </location>
    <ligand>
        <name>Fe cation</name>
        <dbReference type="ChEBI" id="CHEBI:24875"/>
        <note>ligand shared with heterodimeric partner</note>
    </ligand>
</feature>
<feature type="binding site" evidence="2">
    <location>
        <position position="332"/>
    </location>
    <ligand>
        <name>[CaMn4O5] cluster</name>
        <dbReference type="ChEBI" id="CHEBI:189552"/>
    </ligand>
</feature>
<feature type="binding site" evidence="2">
    <location>
        <position position="333"/>
    </location>
    <ligand>
        <name>[CaMn4O5] cluster</name>
        <dbReference type="ChEBI" id="CHEBI:189552"/>
    </ligand>
</feature>
<feature type="binding site" evidence="2">
    <location>
        <position position="342"/>
    </location>
    <ligand>
        <name>[CaMn4O5] cluster</name>
        <dbReference type="ChEBI" id="CHEBI:189552"/>
    </ligand>
</feature>
<feature type="binding site" evidence="2">
    <location>
        <position position="344"/>
    </location>
    <ligand>
        <name>[CaMn4O5] cluster</name>
        <dbReference type="ChEBI" id="CHEBI:189552"/>
    </ligand>
</feature>
<feature type="site" description="Tyrosine radical intermediate" evidence="2">
    <location>
        <position position="161"/>
    </location>
</feature>
<feature type="site" description="Stabilizes free radical intermediate" evidence="2">
    <location>
        <position position="190"/>
    </location>
</feature>
<feature type="site" description="Cleavage; by CTPA" evidence="2">
    <location>
        <begin position="344"/>
        <end position="345"/>
    </location>
</feature>
<feature type="modified residue" description="N-acetylthreonine" evidence="1 2">
    <location>
        <position position="2"/>
    </location>
</feature>
<feature type="modified residue" description="Phosphothreonine" evidence="1 2">
    <location>
        <position position="2"/>
    </location>
</feature>
<evidence type="ECO:0000250" key="1">
    <source>
        <dbReference type="UniProtKB" id="P83755"/>
    </source>
</evidence>
<evidence type="ECO:0000255" key="2">
    <source>
        <dbReference type="HAMAP-Rule" id="MF_01379"/>
    </source>
</evidence>
<sequence>MTAILERRESESLWGRFCNWITSTENRLYIGWFGVLMIPTLLTATSVFIIAFIAAPPVDIDGIREPVSGSLLYGNNIISGAIIPTSAAIGLHFYPIWEAASVDEWLYNGGPYELIVLHFLLGVACYMGREWELSFRLGMRPWIAVAYSAPVAAATAVFLIYPIGQGSFSDGMPLGISGTFNFMIVFQAEHNILMHPFHMLGVAGVFGGSLFSAMHGSLVTSSLIRETTENESANEGYRFGQEEETYNIVAAHGYFGRLIFQYASFNNSRSLHFFLAAWPVVGIWFTALGISTMAFNLNGFNFNQSVVDSQGRVINTWADIINRANLGMEVMHERNAHNFPLDLAVVEAPSTNG</sequence>